<proteinExistence type="inferred from homology"/>
<evidence type="ECO:0000255" key="1">
    <source>
        <dbReference type="HAMAP-Rule" id="MF_01057"/>
    </source>
</evidence>
<protein>
    <recommendedName>
        <fullName evidence="1">tRNA (guanine-N(7)-)-methyltransferase</fullName>
        <ecNumber evidence="1">2.1.1.33</ecNumber>
    </recommendedName>
    <alternativeName>
        <fullName evidence="1">tRNA (guanine(46)-N(7))-methyltransferase</fullName>
    </alternativeName>
    <alternativeName>
        <fullName evidence="1">tRNA(m7G46)-methyltransferase</fullName>
    </alternativeName>
</protein>
<gene>
    <name evidence="1" type="primary">trmB</name>
    <name type="ordered locus">TM_0925</name>
</gene>
<accession>Q9X027</accession>
<sequence>MVVTEYELKPQNFPRFPLDWSEIFGRKAKIVVEIGFGNGEFLAELARRHPEKDFVGFEVSITSFVKAQKKFKRYNLKNVRLVKVDARFGLRELFPDNSVEKVYINFPCPWPKKRHESRRITSYDFLQTLSAVLEMDGTVEFATDEEWYAREVLDTFESSEYFVVDVFEENFKRDVETRYERKWKSQGKKTFLIVARKVKNGTVKRLMEGENTMAHSVFEGNVTWEKLKELEGKVFKDKNKIFVVKKVYRDGDYLLKVISTDEGGFQQVYYLNLSGRDGKWVLKLDEGSDPYRTPALKWSLRRIPEELTAQGSP</sequence>
<feature type="chain" id="PRO_0000171413" description="tRNA (guanine-N(7)-)-methyltransferase">
    <location>
        <begin position="1"/>
        <end position="313"/>
    </location>
</feature>
<feature type="binding site" evidence="1">
    <location>
        <position position="33"/>
    </location>
    <ligand>
        <name>S-adenosyl-L-methionine</name>
        <dbReference type="ChEBI" id="CHEBI:59789"/>
    </ligand>
</feature>
<feature type="binding site" evidence="1">
    <location>
        <position position="58"/>
    </location>
    <ligand>
        <name>S-adenosyl-L-methionine</name>
        <dbReference type="ChEBI" id="CHEBI:59789"/>
    </ligand>
</feature>
<feature type="binding site" evidence="1">
    <location>
        <position position="85"/>
    </location>
    <ligand>
        <name>S-adenosyl-L-methionine</name>
        <dbReference type="ChEBI" id="CHEBI:59789"/>
    </ligand>
</feature>
<feature type="binding site" evidence="1">
    <location>
        <position position="112"/>
    </location>
    <ligand>
        <name>substrate</name>
    </ligand>
</feature>
<feature type="binding site" evidence="1">
    <location>
        <position position="144"/>
    </location>
    <ligand>
        <name>substrate</name>
    </ligand>
</feature>
<feature type="binding site" evidence="1">
    <location>
        <begin position="177"/>
        <end position="180"/>
    </location>
    <ligand>
        <name>substrate</name>
    </ligand>
</feature>
<name>TRMB_THEMA</name>
<keyword id="KW-0489">Methyltransferase</keyword>
<keyword id="KW-1185">Reference proteome</keyword>
<keyword id="KW-0949">S-adenosyl-L-methionine</keyword>
<keyword id="KW-0808">Transferase</keyword>
<keyword id="KW-0819">tRNA processing</keyword>
<comment type="function">
    <text evidence="1">Catalyzes the formation of N(7)-methylguanine at position 46 (m7G46) in tRNA.</text>
</comment>
<comment type="catalytic activity">
    <reaction evidence="1">
        <text>guanosine(46) in tRNA + S-adenosyl-L-methionine = N(7)-methylguanosine(46) in tRNA + S-adenosyl-L-homocysteine</text>
        <dbReference type="Rhea" id="RHEA:42708"/>
        <dbReference type="Rhea" id="RHEA-COMP:10188"/>
        <dbReference type="Rhea" id="RHEA-COMP:10189"/>
        <dbReference type="ChEBI" id="CHEBI:57856"/>
        <dbReference type="ChEBI" id="CHEBI:59789"/>
        <dbReference type="ChEBI" id="CHEBI:74269"/>
        <dbReference type="ChEBI" id="CHEBI:74480"/>
        <dbReference type="EC" id="2.1.1.33"/>
    </reaction>
</comment>
<comment type="pathway">
    <text evidence="1">tRNA modification; N(7)-methylguanine-tRNA biosynthesis.</text>
</comment>
<comment type="similarity">
    <text evidence="1">Belongs to the class I-like SAM-binding methyltransferase superfamily. TrmB family.</text>
</comment>
<dbReference type="EC" id="2.1.1.33" evidence="1"/>
<dbReference type="EMBL" id="AE000512">
    <property type="protein sequence ID" value="AAD36006.1"/>
    <property type="molecule type" value="Genomic_DNA"/>
</dbReference>
<dbReference type="PIR" id="F72317">
    <property type="entry name" value="F72317"/>
</dbReference>
<dbReference type="RefSeq" id="NP_228733.1">
    <property type="nucleotide sequence ID" value="NC_000853.1"/>
</dbReference>
<dbReference type="RefSeq" id="WP_004080637.1">
    <property type="nucleotide sequence ID" value="NC_000853.1"/>
</dbReference>
<dbReference type="SMR" id="Q9X027"/>
<dbReference type="FunCoup" id="Q9X027">
    <property type="interactions" value="283"/>
</dbReference>
<dbReference type="STRING" id="243274.TM_0925"/>
<dbReference type="PaxDb" id="243274-THEMA_00010"/>
<dbReference type="EnsemblBacteria" id="AAD36006">
    <property type="protein sequence ID" value="AAD36006"/>
    <property type="gene ID" value="TM_0925"/>
</dbReference>
<dbReference type="KEGG" id="tma:TM0925"/>
<dbReference type="KEGG" id="tmi:THEMA_00010"/>
<dbReference type="KEGG" id="tmm:Tmari_0927"/>
<dbReference type="KEGG" id="tmw:THMA_0947"/>
<dbReference type="eggNOG" id="COG0220">
    <property type="taxonomic scope" value="Bacteria"/>
</dbReference>
<dbReference type="InParanoid" id="Q9X027"/>
<dbReference type="OrthoDB" id="9802090at2"/>
<dbReference type="UniPathway" id="UPA00989"/>
<dbReference type="Proteomes" id="UP000008183">
    <property type="component" value="Chromosome"/>
</dbReference>
<dbReference type="GO" id="GO:0043527">
    <property type="term" value="C:tRNA methyltransferase complex"/>
    <property type="evidence" value="ECO:0000318"/>
    <property type="project" value="GO_Central"/>
</dbReference>
<dbReference type="GO" id="GO:0008176">
    <property type="term" value="F:tRNA (guanine(46)-N7)-methyltransferase activity"/>
    <property type="evidence" value="ECO:0000318"/>
    <property type="project" value="GO_Central"/>
</dbReference>
<dbReference type="GO" id="GO:0036265">
    <property type="term" value="P:RNA (guanine-N7)-methylation"/>
    <property type="evidence" value="ECO:0000318"/>
    <property type="project" value="GO_Central"/>
</dbReference>
<dbReference type="GO" id="GO:0030488">
    <property type="term" value="P:tRNA methylation"/>
    <property type="evidence" value="ECO:0000318"/>
    <property type="project" value="GO_Central"/>
</dbReference>
<dbReference type="CDD" id="cd02440">
    <property type="entry name" value="AdoMet_MTases"/>
    <property type="match status" value="1"/>
</dbReference>
<dbReference type="Gene3D" id="3.40.50.150">
    <property type="entry name" value="Vaccinia Virus protein VP39"/>
    <property type="match status" value="1"/>
</dbReference>
<dbReference type="HAMAP" id="MF_01057">
    <property type="entry name" value="tRNA_methyltr_TrmB"/>
    <property type="match status" value="1"/>
</dbReference>
<dbReference type="InterPro" id="IPR029063">
    <property type="entry name" value="SAM-dependent_MTases_sf"/>
</dbReference>
<dbReference type="InterPro" id="IPR003358">
    <property type="entry name" value="tRNA_(Gua-N-7)_MeTrfase_Trmb"/>
</dbReference>
<dbReference type="InterPro" id="IPR055361">
    <property type="entry name" value="tRNA_methyltr_TrmB_bact"/>
</dbReference>
<dbReference type="NCBIfam" id="TIGR00091">
    <property type="entry name" value="tRNA (guanosine(46)-N7)-methyltransferase TrmB"/>
    <property type="match status" value="1"/>
</dbReference>
<dbReference type="PANTHER" id="PTHR23417">
    <property type="entry name" value="3-DEOXY-D-MANNO-OCTULOSONIC-ACID TRANSFERASE/TRNA GUANINE-N 7 - -METHYLTRANSFERASE"/>
    <property type="match status" value="1"/>
</dbReference>
<dbReference type="PANTHER" id="PTHR23417:SF14">
    <property type="entry name" value="PENTACOTRIPEPTIDE-REPEAT REGION OF PRORP DOMAIN-CONTAINING PROTEIN"/>
    <property type="match status" value="1"/>
</dbReference>
<dbReference type="Pfam" id="PF02390">
    <property type="entry name" value="Methyltransf_4"/>
    <property type="match status" value="1"/>
</dbReference>
<dbReference type="SUPFAM" id="SSF53335">
    <property type="entry name" value="S-adenosyl-L-methionine-dependent methyltransferases"/>
    <property type="match status" value="1"/>
</dbReference>
<dbReference type="PROSITE" id="PS51625">
    <property type="entry name" value="SAM_MT_TRMB"/>
    <property type="match status" value="1"/>
</dbReference>
<organism>
    <name type="scientific">Thermotoga maritima (strain ATCC 43589 / DSM 3109 / JCM 10099 / NBRC 100826 / MSB8)</name>
    <dbReference type="NCBI Taxonomy" id="243274"/>
    <lineage>
        <taxon>Bacteria</taxon>
        <taxon>Thermotogati</taxon>
        <taxon>Thermotogota</taxon>
        <taxon>Thermotogae</taxon>
        <taxon>Thermotogales</taxon>
        <taxon>Thermotogaceae</taxon>
        <taxon>Thermotoga</taxon>
    </lineage>
</organism>
<reference key="1">
    <citation type="journal article" date="1999" name="Nature">
        <title>Evidence for lateral gene transfer between Archaea and Bacteria from genome sequence of Thermotoga maritima.</title>
        <authorList>
            <person name="Nelson K.E."/>
            <person name="Clayton R.A."/>
            <person name="Gill S.R."/>
            <person name="Gwinn M.L."/>
            <person name="Dodson R.J."/>
            <person name="Haft D.H."/>
            <person name="Hickey E.K."/>
            <person name="Peterson J.D."/>
            <person name="Nelson W.C."/>
            <person name="Ketchum K.A."/>
            <person name="McDonald L.A."/>
            <person name="Utterback T.R."/>
            <person name="Malek J.A."/>
            <person name="Linher K.D."/>
            <person name="Garrett M.M."/>
            <person name="Stewart A.M."/>
            <person name="Cotton M.D."/>
            <person name="Pratt M.S."/>
            <person name="Phillips C.A."/>
            <person name="Richardson D.L."/>
            <person name="Heidelberg J.F."/>
            <person name="Sutton G.G."/>
            <person name="Fleischmann R.D."/>
            <person name="Eisen J.A."/>
            <person name="White O."/>
            <person name="Salzberg S.L."/>
            <person name="Smith H.O."/>
            <person name="Venter J.C."/>
            <person name="Fraser C.M."/>
        </authorList>
    </citation>
    <scope>NUCLEOTIDE SEQUENCE [LARGE SCALE GENOMIC DNA]</scope>
    <source>
        <strain>ATCC 43589 / DSM 3109 / JCM 10099 / NBRC 100826 / MSB8</strain>
    </source>
</reference>